<dbReference type="EC" id="3.4.23.43" evidence="1"/>
<dbReference type="EC" id="2.1.1.-" evidence="1"/>
<dbReference type="EMBL" id="U12432">
    <property type="protein sequence ID" value="AAC43571.1"/>
    <property type="molecule type" value="Genomic_DNA"/>
</dbReference>
<dbReference type="EMBL" id="AE008922">
    <property type="protein sequence ID" value="AAM42372.1"/>
    <property type="molecule type" value="Genomic_DNA"/>
</dbReference>
<dbReference type="PIR" id="S70810">
    <property type="entry name" value="S70810"/>
</dbReference>
<dbReference type="RefSeq" id="NP_638448.1">
    <property type="nucleotide sequence ID" value="NC_003902.1"/>
</dbReference>
<dbReference type="RefSeq" id="WP_011038216.1">
    <property type="nucleotide sequence ID" value="NC_003902.1"/>
</dbReference>
<dbReference type="STRING" id="190485.XCC3101"/>
<dbReference type="MEROPS" id="A24.001"/>
<dbReference type="EnsemblBacteria" id="AAM42372">
    <property type="protein sequence ID" value="AAM42372"/>
    <property type="gene ID" value="XCC3101"/>
</dbReference>
<dbReference type="KEGG" id="xcc:XCC3101"/>
<dbReference type="PATRIC" id="fig|190485.4.peg.3313"/>
<dbReference type="eggNOG" id="COG1989">
    <property type="taxonomic scope" value="Bacteria"/>
</dbReference>
<dbReference type="HOGENOM" id="CLU_057101_0_0_6"/>
<dbReference type="OrthoDB" id="9789291at2"/>
<dbReference type="Proteomes" id="UP000001010">
    <property type="component" value="Chromosome"/>
</dbReference>
<dbReference type="GO" id="GO:0005886">
    <property type="term" value="C:plasma membrane"/>
    <property type="evidence" value="ECO:0000318"/>
    <property type="project" value="GO_Central"/>
</dbReference>
<dbReference type="GO" id="GO:0004190">
    <property type="term" value="F:aspartic-type endopeptidase activity"/>
    <property type="evidence" value="ECO:0000318"/>
    <property type="project" value="GO_Central"/>
</dbReference>
<dbReference type="GO" id="GO:0008168">
    <property type="term" value="F:methyltransferase activity"/>
    <property type="evidence" value="ECO:0007669"/>
    <property type="project" value="UniProtKB-KW"/>
</dbReference>
<dbReference type="GO" id="GO:0032259">
    <property type="term" value="P:methylation"/>
    <property type="evidence" value="ECO:0007669"/>
    <property type="project" value="UniProtKB-KW"/>
</dbReference>
<dbReference type="GO" id="GO:0006465">
    <property type="term" value="P:signal peptide processing"/>
    <property type="evidence" value="ECO:0000318"/>
    <property type="project" value="GO_Central"/>
</dbReference>
<dbReference type="FunFam" id="1.20.120.1220:FF:000001">
    <property type="entry name" value="Type 4 prepilin-like proteins leader peptide-processing enzyme"/>
    <property type="match status" value="1"/>
</dbReference>
<dbReference type="Gene3D" id="1.20.120.1220">
    <property type="match status" value="1"/>
</dbReference>
<dbReference type="InterPro" id="IPR014032">
    <property type="entry name" value="Peptidase_A24A_bac"/>
</dbReference>
<dbReference type="InterPro" id="IPR000045">
    <property type="entry name" value="Prepilin_IV_endopep_pep"/>
</dbReference>
<dbReference type="InterPro" id="IPR010627">
    <property type="entry name" value="Prepilin_pept_A24_N"/>
</dbReference>
<dbReference type="InterPro" id="IPR050882">
    <property type="entry name" value="Prepilin_peptidase/N-MTase"/>
</dbReference>
<dbReference type="PANTHER" id="PTHR30487:SF0">
    <property type="entry name" value="PREPILIN LEADER PEPTIDASE_N-METHYLTRANSFERASE-RELATED"/>
    <property type="match status" value="1"/>
</dbReference>
<dbReference type="PANTHER" id="PTHR30487">
    <property type="entry name" value="TYPE 4 PREPILIN-LIKE PROTEINS LEADER PEPTIDE-PROCESSING ENZYME"/>
    <property type="match status" value="1"/>
</dbReference>
<dbReference type="Pfam" id="PF06750">
    <property type="entry name" value="A24_N_bact"/>
    <property type="match status" value="1"/>
</dbReference>
<dbReference type="Pfam" id="PF01478">
    <property type="entry name" value="Peptidase_A24"/>
    <property type="match status" value="1"/>
</dbReference>
<dbReference type="PRINTS" id="PR00864">
    <property type="entry name" value="PREPILNPTASE"/>
</dbReference>
<accession>Q56763</accession>
<organism>
    <name type="scientific">Xanthomonas campestris pv. campestris (strain ATCC 33913 / DSM 3586 / NCPPB 528 / LMG 568 / P 25)</name>
    <dbReference type="NCBI Taxonomy" id="190485"/>
    <lineage>
        <taxon>Bacteria</taxon>
        <taxon>Pseudomonadati</taxon>
        <taxon>Pseudomonadota</taxon>
        <taxon>Gammaproteobacteria</taxon>
        <taxon>Lysobacterales</taxon>
        <taxon>Lysobacteraceae</taxon>
        <taxon>Xanthomonas</taxon>
    </lineage>
</organism>
<keyword id="KW-0997">Cell inner membrane</keyword>
<keyword id="KW-1003">Cell membrane</keyword>
<keyword id="KW-0378">Hydrolase</keyword>
<keyword id="KW-0472">Membrane</keyword>
<keyword id="KW-0489">Methyltransferase</keyword>
<keyword id="KW-0511">Multifunctional enzyme</keyword>
<keyword id="KW-0645">Protease</keyword>
<keyword id="KW-1185">Reference proteome</keyword>
<keyword id="KW-0949">S-adenosyl-L-methionine</keyword>
<keyword id="KW-0808">Transferase</keyword>
<keyword id="KW-0812">Transmembrane</keyword>
<keyword id="KW-1133">Transmembrane helix</keyword>
<name>LEP4_XANCP</name>
<comment type="function">
    <text evidence="1">Plays an essential role in type IV pili and type II pseudopili formation by proteolytically removing the leader sequence from substrate proteins and subsequently monomethylating the alpha-amino group of the newly exposed N-terminal phenylalanine.</text>
</comment>
<comment type="catalytic activity">
    <reaction evidence="1">
        <text>Typically cleaves a -Gly-|-Phe- bond to release an N-terminal, basic peptide of 5-8 residues from type IV prepilin, and then N-methylates the new N-terminal amino group, the methyl donor being S-adenosyl-L-methionine.</text>
        <dbReference type="EC" id="3.4.23.43"/>
    </reaction>
</comment>
<comment type="subcellular location">
    <subcellularLocation>
        <location evidence="1">Cell inner membrane</location>
        <topology evidence="1">Multi-pass membrane protein</topology>
    </subcellularLocation>
</comment>
<comment type="similarity">
    <text evidence="3">Belongs to the peptidase A24 family.</text>
</comment>
<proteinExistence type="inferred from homology"/>
<evidence type="ECO:0000250" key="1">
    <source>
        <dbReference type="UniProtKB" id="P22610"/>
    </source>
</evidence>
<evidence type="ECO:0000255" key="2"/>
<evidence type="ECO:0000305" key="3"/>
<protein>
    <recommendedName>
        <fullName>Prepilin leader peptidase/N-methyltransferase</fullName>
    </recommendedName>
    <domain>
        <recommendedName>
            <fullName>Leader peptidase</fullName>
            <ecNumber evidence="1">3.4.23.43</ecNumber>
        </recommendedName>
        <alternativeName>
            <fullName>Prepilin peptidase</fullName>
        </alternativeName>
    </domain>
    <domain>
        <recommendedName>
            <fullName>N-methyltransferase</fullName>
            <ecNumber evidence="1">2.1.1.-</ecNumber>
        </recommendedName>
    </domain>
</protein>
<reference key="1">
    <citation type="journal article" date="1995" name="Mol. Microbiol.">
        <title>The type IV pre-pilin leader peptidase of Xanthomonas campestris pv. campestris is functional without conserved cysteine residues.</title>
        <authorList>
            <person name="Hu N.-T.T."/>
            <person name="Lee P.F."/>
            <person name="Chen C."/>
        </authorList>
    </citation>
    <scope>NUCLEOTIDE SEQUENCE [GENOMIC DNA]</scope>
    <source>
        <strain>Xc1701</strain>
    </source>
</reference>
<reference key="2">
    <citation type="journal article" date="2002" name="Nature">
        <title>Comparison of the genomes of two Xanthomonas pathogens with differing host specificities.</title>
        <authorList>
            <person name="da Silva A.C.R."/>
            <person name="Ferro J.A."/>
            <person name="Reinach F.C."/>
            <person name="Farah C.S."/>
            <person name="Furlan L.R."/>
            <person name="Quaggio R.B."/>
            <person name="Monteiro-Vitorello C.B."/>
            <person name="Van Sluys M.A."/>
            <person name="Almeida N.F. Jr."/>
            <person name="Alves L.M.C."/>
            <person name="do Amaral A.M."/>
            <person name="Bertolini M.C."/>
            <person name="Camargo L.E.A."/>
            <person name="Camarotte G."/>
            <person name="Cannavan F."/>
            <person name="Cardozo J."/>
            <person name="Chambergo F."/>
            <person name="Ciapina L.P."/>
            <person name="Cicarelli R.M.B."/>
            <person name="Coutinho L.L."/>
            <person name="Cursino-Santos J.R."/>
            <person name="El-Dorry H."/>
            <person name="Faria J.B."/>
            <person name="Ferreira A.J.S."/>
            <person name="Ferreira R.C.C."/>
            <person name="Ferro M.I.T."/>
            <person name="Formighieri E.F."/>
            <person name="Franco M.C."/>
            <person name="Greggio C.C."/>
            <person name="Gruber A."/>
            <person name="Katsuyama A.M."/>
            <person name="Kishi L.T."/>
            <person name="Leite R.P."/>
            <person name="Lemos E.G.M."/>
            <person name="Lemos M.V.F."/>
            <person name="Locali E.C."/>
            <person name="Machado M.A."/>
            <person name="Madeira A.M.B.N."/>
            <person name="Martinez-Rossi N.M."/>
            <person name="Martins E.C."/>
            <person name="Meidanis J."/>
            <person name="Menck C.F.M."/>
            <person name="Miyaki C.Y."/>
            <person name="Moon D.H."/>
            <person name="Moreira L.M."/>
            <person name="Novo M.T.M."/>
            <person name="Okura V.K."/>
            <person name="Oliveira M.C."/>
            <person name="Oliveira V.R."/>
            <person name="Pereira H.A."/>
            <person name="Rossi A."/>
            <person name="Sena J.A.D."/>
            <person name="Silva C."/>
            <person name="de Souza R.F."/>
            <person name="Spinola L.A.F."/>
            <person name="Takita M.A."/>
            <person name="Tamura R.E."/>
            <person name="Teixeira E.C."/>
            <person name="Tezza R.I.D."/>
            <person name="Trindade dos Santos M."/>
            <person name="Truffi D."/>
            <person name="Tsai S.M."/>
            <person name="White F.F."/>
            <person name="Setubal J.C."/>
            <person name="Kitajima J.P."/>
        </authorList>
    </citation>
    <scope>NUCLEOTIDE SEQUENCE [LARGE SCALE GENOMIC DNA]</scope>
    <source>
        <strain>ATCC 33913 / DSM 3586 / NCPPB 528 / LMG 568 / P 25</strain>
    </source>
</reference>
<gene>
    <name type="primary">xpsO</name>
    <name type="synonym">pilD</name>
    <name type="ordered locus">XCC3101</name>
</gene>
<feature type="chain" id="PRO_0000192631" description="Prepilin leader peptidase/N-methyltransferase">
    <location>
        <begin position="1"/>
        <end position="287"/>
    </location>
</feature>
<feature type="transmembrane region" description="Helical" evidence="2">
    <location>
        <begin position="10"/>
        <end position="30"/>
    </location>
</feature>
<feature type="transmembrane region" description="Helical" evidence="2">
    <location>
        <begin position="101"/>
        <end position="121"/>
    </location>
</feature>
<feature type="transmembrane region" description="Helical" evidence="2">
    <location>
        <begin position="125"/>
        <end position="145"/>
    </location>
</feature>
<feature type="transmembrane region" description="Helical" evidence="2">
    <location>
        <begin position="177"/>
        <end position="197"/>
    </location>
</feature>
<feature type="transmembrane region" description="Helical" evidence="2">
    <location>
        <begin position="226"/>
        <end position="246"/>
    </location>
</feature>
<feature type="transmembrane region" description="Helical" evidence="2">
    <location>
        <begin position="253"/>
        <end position="273"/>
    </location>
</feature>
<sequence length="287" mass="31843">MAFLDQHPGLGFPAAAGLGLLIGSFLNVVILRLPKRMEWQWRRDAREILELPDIYEPPPPGIVVEPSHDPVTGDKLKWWENIPLFSWLMLRGKSRYSGKPISIQYPLVELLTSILCVASVWRFGFGWQGFGAIVLSCFLVAMSGIDLRHKLLPDQLTLPLMWLGLVGSMDNLYMPAKPALLGAAVGYVSLWTVWWLFKQLTGKEGMGHGDFKLLAALGAWCGLKGILPIILISSLVGAVLGSIWLFAKGRDRATPIPFGPYLAIAGWVVFFWGNDLVDGYLRFAGLR</sequence>